<dbReference type="EC" id="6.1.1.20" evidence="1"/>
<dbReference type="EMBL" id="CP000090">
    <property type="protein sequence ID" value="AAZ60649.1"/>
    <property type="molecule type" value="Genomic_DNA"/>
</dbReference>
<dbReference type="SMR" id="Q472N4"/>
<dbReference type="STRING" id="264198.Reut_A1279"/>
<dbReference type="KEGG" id="reu:Reut_A1279"/>
<dbReference type="eggNOG" id="COG0016">
    <property type="taxonomic scope" value="Bacteria"/>
</dbReference>
<dbReference type="HOGENOM" id="CLU_025086_0_1_4"/>
<dbReference type="GO" id="GO:0005737">
    <property type="term" value="C:cytoplasm"/>
    <property type="evidence" value="ECO:0007669"/>
    <property type="project" value="UniProtKB-SubCell"/>
</dbReference>
<dbReference type="GO" id="GO:0005524">
    <property type="term" value="F:ATP binding"/>
    <property type="evidence" value="ECO:0007669"/>
    <property type="project" value="UniProtKB-UniRule"/>
</dbReference>
<dbReference type="GO" id="GO:0000287">
    <property type="term" value="F:magnesium ion binding"/>
    <property type="evidence" value="ECO:0007669"/>
    <property type="project" value="UniProtKB-UniRule"/>
</dbReference>
<dbReference type="GO" id="GO:0004826">
    <property type="term" value="F:phenylalanine-tRNA ligase activity"/>
    <property type="evidence" value="ECO:0007669"/>
    <property type="project" value="UniProtKB-UniRule"/>
</dbReference>
<dbReference type="GO" id="GO:0000049">
    <property type="term" value="F:tRNA binding"/>
    <property type="evidence" value="ECO:0007669"/>
    <property type="project" value="InterPro"/>
</dbReference>
<dbReference type="GO" id="GO:0006432">
    <property type="term" value="P:phenylalanyl-tRNA aminoacylation"/>
    <property type="evidence" value="ECO:0007669"/>
    <property type="project" value="UniProtKB-UniRule"/>
</dbReference>
<dbReference type="CDD" id="cd00496">
    <property type="entry name" value="PheRS_alpha_core"/>
    <property type="match status" value="1"/>
</dbReference>
<dbReference type="FunFam" id="3.30.930.10:FF:000003">
    <property type="entry name" value="Phenylalanine--tRNA ligase alpha subunit"/>
    <property type="match status" value="1"/>
</dbReference>
<dbReference type="Gene3D" id="3.30.930.10">
    <property type="entry name" value="Bira Bifunctional Protein, Domain 2"/>
    <property type="match status" value="1"/>
</dbReference>
<dbReference type="HAMAP" id="MF_00281">
    <property type="entry name" value="Phe_tRNA_synth_alpha1"/>
    <property type="match status" value="1"/>
</dbReference>
<dbReference type="InterPro" id="IPR006195">
    <property type="entry name" value="aa-tRNA-synth_II"/>
</dbReference>
<dbReference type="InterPro" id="IPR045864">
    <property type="entry name" value="aa-tRNA-synth_II/BPL/LPL"/>
</dbReference>
<dbReference type="InterPro" id="IPR004529">
    <property type="entry name" value="Phe-tRNA-synth_IIc_asu"/>
</dbReference>
<dbReference type="InterPro" id="IPR004188">
    <property type="entry name" value="Phe-tRNA_ligase_II_N"/>
</dbReference>
<dbReference type="InterPro" id="IPR022911">
    <property type="entry name" value="Phe_tRNA_ligase_alpha1_bac"/>
</dbReference>
<dbReference type="InterPro" id="IPR002319">
    <property type="entry name" value="Phenylalanyl-tRNA_Synthase"/>
</dbReference>
<dbReference type="InterPro" id="IPR010978">
    <property type="entry name" value="tRNA-bd_arm"/>
</dbReference>
<dbReference type="NCBIfam" id="TIGR00468">
    <property type="entry name" value="pheS"/>
    <property type="match status" value="1"/>
</dbReference>
<dbReference type="PANTHER" id="PTHR11538:SF41">
    <property type="entry name" value="PHENYLALANINE--TRNA LIGASE, MITOCHONDRIAL"/>
    <property type="match status" value="1"/>
</dbReference>
<dbReference type="PANTHER" id="PTHR11538">
    <property type="entry name" value="PHENYLALANYL-TRNA SYNTHETASE"/>
    <property type="match status" value="1"/>
</dbReference>
<dbReference type="Pfam" id="PF02912">
    <property type="entry name" value="Phe_tRNA-synt_N"/>
    <property type="match status" value="1"/>
</dbReference>
<dbReference type="Pfam" id="PF01409">
    <property type="entry name" value="tRNA-synt_2d"/>
    <property type="match status" value="1"/>
</dbReference>
<dbReference type="SUPFAM" id="SSF55681">
    <property type="entry name" value="Class II aaRS and biotin synthetases"/>
    <property type="match status" value="1"/>
</dbReference>
<dbReference type="SUPFAM" id="SSF46589">
    <property type="entry name" value="tRNA-binding arm"/>
    <property type="match status" value="1"/>
</dbReference>
<dbReference type="PROSITE" id="PS50862">
    <property type="entry name" value="AA_TRNA_LIGASE_II"/>
    <property type="match status" value="1"/>
</dbReference>
<keyword id="KW-0030">Aminoacyl-tRNA synthetase</keyword>
<keyword id="KW-0067">ATP-binding</keyword>
<keyword id="KW-0963">Cytoplasm</keyword>
<keyword id="KW-0436">Ligase</keyword>
<keyword id="KW-0460">Magnesium</keyword>
<keyword id="KW-0479">Metal-binding</keyword>
<keyword id="KW-0547">Nucleotide-binding</keyword>
<keyword id="KW-0648">Protein biosynthesis</keyword>
<evidence type="ECO:0000255" key="1">
    <source>
        <dbReference type="HAMAP-Rule" id="MF_00281"/>
    </source>
</evidence>
<proteinExistence type="inferred from homology"/>
<gene>
    <name evidence="1" type="primary">pheS</name>
    <name type="ordered locus">Reut_A1279</name>
</gene>
<organism>
    <name type="scientific">Cupriavidus pinatubonensis (strain JMP 134 / LMG 1197)</name>
    <name type="common">Cupriavidus necator (strain JMP 134)</name>
    <dbReference type="NCBI Taxonomy" id="264198"/>
    <lineage>
        <taxon>Bacteria</taxon>
        <taxon>Pseudomonadati</taxon>
        <taxon>Pseudomonadota</taxon>
        <taxon>Betaproteobacteria</taxon>
        <taxon>Burkholderiales</taxon>
        <taxon>Burkholderiaceae</taxon>
        <taxon>Cupriavidus</taxon>
    </lineage>
</organism>
<feature type="chain" id="PRO_0000232017" description="Phenylalanine--tRNA ligase alpha subunit">
    <location>
        <begin position="1"/>
        <end position="354"/>
    </location>
</feature>
<feature type="binding site" evidence="1">
    <location>
        <position position="279"/>
    </location>
    <ligand>
        <name>Mg(2+)</name>
        <dbReference type="ChEBI" id="CHEBI:18420"/>
        <note>shared with beta subunit</note>
    </ligand>
</feature>
<reference key="1">
    <citation type="journal article" date="2010" name="PLoS ONE">
        <title>The complete multipartite genome sequence of Cupriavidus necator JMP134, a versatile pollutant degrader.</title>
        <authorList>
            <person name="Lykidis A."/>
            <person name="Perez-Pantoja D."/>
            <person name="Ledger T."/>
            <person name="Mavromatis K."/>
            <person name="Anderson I.J."/>
            <person name="Ivanova N.N."/>
            <person name="Hooper S.D."/>
            <person name="Lapidus A."/>
            <person name="Lucas S."/>
            <person name="Gonzalez B."/>
            <person name="Kyrpides N.C."/>
        </authorList>
    </citation>
    <scope>NUCLEOTIDE SEQUENCE [LARGE SCALE GENOMIC DNA]</scope>
    <source>
        <strain>JMP134 / LMG 1197</strain>
    </source>
</reference>
<comment type="catalytic activity">
    <reaction evidence="1">
        <text>tRNA(Phe) + L-phenylalanine + ATP = L-phenylalanyl-tRNA(Phe) + AMP + diphosphate + H(+)</text>
        <dbReference type="Rhea" id="RHEA:19413"/>
        <dbReference type="Rhea" id="RHEA-COMP:9668"/>
        <dbReference type="Rhea" id="RHEA-COMP:9699"/>
        <dbReference type="ChEBI" id="CHEBI:15378"/>
        <dbReference type="ChEBI" id="CHEBI:30616"/>
        <dbReference type="ChEBI" id="CHEBI:33019"/>
        <dbReference type="ChEBI" id="CHEBI:58095"/>
        <dbReference type="ChEBI" id="CHEBI:78442"/>
        <dbReference type="ChEBI" id="CHEBI:78531"/>
        <dbReference type="ChEBI" id="CHEBI:456215"/>
        <dbReference type="EC" id="6.1.1.20"/>
    </reaction>
</comment>
<comment type="cofactor">
    <cofactor evidence="1">
        <name>Mg(2+)</name>
        <dbReference type="ChEBI" id="CHEBI:18420"/>
    </cofactor>
    <text evidence="1">Binds 2 magnesium ions per tetramer.</text>
</comment>
<comment type="subunit">
    <text evidence="1">Tetramer of two alpha and two beta subunits.</text>
</comment>
<comment type="subcellular location">
    <subcellularLocation>
        <location evidence="1">Cytoplasm</location>
    </subcellularLocation>
</comment>
<comment type="similarity">
    <text evidence="1">Belongs to the class-II aminoacyl-tRNA synthetase family. Phe-tRNA synthetase alpha subunit type 1 subfamily.</text>
</comment>
<accession>Q472N4</accession>
<name>SYFA_CUPPJ</name>
<sequence length="354" mass="39769">MSRRQAISTTAMSQDLDQIVADAQAAFAAANDNATLENEKARFLGKTGALTELLKGLGKLDPETRKTEGARINQVKQQVEAALTARRQALADALMNARLSAEAIDVTLPGRAVSRGSLHPVMRTWERVEQIFGSIGFDVADGPEIETDWMNFTALNNPDNHPARSMQDTFYIDGRDSDDKLLLLRTHTSPMQVRYAKMHVEKYAGKAMPPIKVICPGRTYRVDSDATHSPMFNQVEGLWIGEDVSFADLKGVYTDFLRKFFERDDIQVRFRPSYFPFTEPSAEIDMAFGNGKWLEISGSGQVHPNVLRNMGLDPERYIGFAFGSGLERLTMLRYGINDLRLFFEGDVRFLRQFA</sequence>
<protein>
    <recommendedName>
        <fullName evidence="1">Phenylalanine--tRNA ligase alpha subunit</fullName>
        <ecNumber evidence="1">6.1.1.20</ecNumber>
    </recommendedName>
    <alternativeName>
        <fullName evidence="1">Phenylalanyl-tRNA synthetase alpha subunit</fullName>
        <shortName evidence="1">PheRS</shortName>
    </alternativeName>
</protein>